<gene>
    <name evidence="1" type="primary">tfe</name>
    <name type="ordered locus">M1425_1864</name>
</gene>
<sequence length="178" mass="21146">MVNAEDLFINLAKSLLGDDVIDVLRVLLEKGTEMTDEEIANQLNIKVNDVRKKLNLLEEQGFVSYRKTRDKDSGWFIYYWKPNIDQINEILLNRKRLILDKLKSRLEYEKNNTFFICPQDNSRYSFEEAFENEFKCLKCGSQLTYYDTEKIKSFLEQKIRQIEEEIDKETKLGANKSH</sequence>
<reference key="1">
    <citation type="journal article" date="2009" name="Proc. Natl. Acad. Sci. U.S.A.">
        <title>Biogeography of the Sulfolobus islandicus pan-genome.</title>
        <authorList>
            <person name="Reno M.L."/>
            <person name="Held N.L."/>
            <person name="Fields C.J."/>
            <person name="Burke P.V."/>
            <person name="Whitaker R.J."/>
        </authorList>
    </citation>
    <scope>NUCLEOTIDE SEQUENCE [LARGE SCALE GENOMIC DNA]</scope>
    <source>
        <strain>M.14.25 / Kamchatka #1</strain>
    </source>
</reference>
<accession>C3MY51</accession>
<dbReference type="EMBL" id="CP001400">
    <property type="protein sequence ID" value="ACP38608.1"/>
    <property type="molecule type" value="Genomic_DNA"/>
</dbReference>
<dbReference type="RefSeq" id="WP_012711838.1">
    <property type="nucleotide sequence ID" value="NC_012588.1"/>
</dbReference>
<dbReference type="SMR" id="C3MY51"/>
<dbReference type="GeneID" id="84062185"/>
<dbReference type="KEGG" id="sia:M1425_1864"/>
<dbReference type="HOGENOM" id="CLU_100097_0_0_2"/>
<dbReference type="Proteomes" id="UP000001350">
    <property type="component" value="Chromosome"/>
</dbReference>
<dbReference type="GO" id="GO:0003677">
    <property type="term" value="F:DNA binding"/>
    <property type="evidence" value="ECO:0007669"/>
    <property type="project" value="UniProtKB-KW"/>
</dbReference>
<dbReference type="GO" id="GO:0006355">
    <property type="term" value="P:regulation of DNA-templated transcription"/>
    <property type="evidence" value="ECO:0007669"/>
    <property type="project" value="InterPro"/>
</dbReference>
<dbReference type="GO" id="GO:0006367">
    <property type="term" value="P:transcription initiation at RNA polymerase II promoter"/>
    <property type="evidence" value="ECO:0007669"/>
    <property type="project" value="InterPro"/>
</dbReference>
<dbReference type="Gene3D" id="1.10.10.10">
    <property type="entry name" value="Winged helix-like DNA-binding domain superfamily/Winged helix DNA-binding domain"/>
    <property type="match status" value="1"/>
</dbReference>
<dbReference type="HAMAP" id="MF_01909">
    <property type="entry name" value="TFE_arch"/>
    <property type="match status" value="1"/>
</dbReference>
<dbReference type="InterPro" id="IPR016481">
    <property type="entry name" value="TF_E_archaea"/>
</dbReference>
<dbReference type="InterPro" id="IPR039997">
    <property type="entry name" value="TFE"/>
</dbReference>
<dbReference type="InterPro" id="IPR017919">
    <property type="entry name" value="TFIIE/TFIIEa_HTH"/>
</dbReference>
<dbReference type="InterPro" id="IPR002853">
    <property type="entry name" value="TFIIE_asu"/>
</dbReference>
<dbReference type="InterPro" id="IPR024550">
    <property type="entry name" value="TFIIEa/SarR/Rpc3_HTH_dom"/>
</dbReference>
<dbReference type="InterPro" id="IPR036388">
    <property type="entry name" value="WH-like_DNA-bd_sf"/>
</dbReference>
<dbReference type="InterPro" id="IPR036390">
    <property type="entry name" value="WH_DNA-bd_sf"/>
</dbReference>
<dbReference type="PANTHER" id="PTHR13097:SF7">
    <property type="entry name" value="GENERAL TRANSCRIPTION FACTOR IIE SUBUNIT 1"/>
    <property type="match status" value="1"/>
</dbReference>
<dbReference type="PANTHER" id="PTHR13097">
    <property type="entry name" value="TRANSCRIPTION INITIATION FACTOR IIE, ALPHA SUBUNIT"/>
    <property type="match status" value="1"/>
</dbReference>
<dbReference type="Pfam" id="PF02002">
    <property type="entry name" value="TFIIE_alpha"/>
    <property type="match status" value="1"/>
</dbReference>
<dbReference type="PIRSF" id="PIRSF006373">
    <property type="entry name" value="TF_E_archaea"/>
    <property type="match status" value="1"/>
</dbReference>
<dbReference type="SMART" id="SM00531">
    <property type="entry name" value="TFIIE"/>
    <property type="match status" value="1"/>
</dbReference>
<dbReference type="SUPFAM" id="SSF46785">
    <property type="entry name" value="Winged helix' DNA-binding domain"/>
    <property type="match status" value="1"/>
</dbReference>
<dbReference type="PROSITE" id="PS51344">
    <property type="entry name" value="HTH_TFE_IIE"/>
    <property type="match status" value="1"/>
</dbReference>
<comment type="function">
    <text evidence="1">Transcription factor that plays a role in the activation of archaeal genes transcribed by RNA polymerase. Facilitates transcription initiation by enhancing TATA-box recognition by TATA-box-binding protein (Tbp), and transcription factor B (Tfb) and RNA polymerase recruitment. Not absolutely required for transcription in vitro, but particularly important in cases where Tbp or Tfb function is not optimal. It dynamically alters the nucleic acid-binding properties of RNA polymerases by stabilizing the initiation complex and destabilizing elongation complexes. Seems to translocate with the RNA polymerase following initiation and acts by binding to the non template strand of the transcription bubble in elongation complexes.</text>
</comment>
<comment type="subunit">
    <text evidence="1">Monomer. Interaction with RNA polymerase subunits RpoF and RpoE is necessary for Tfe stimulatory transcription activity. Able to interact with Tbp and RNA polymerase in the absence of DNA promoter. Interacts both with the preinitiation and elongation complexes.</text>
</comment>
<comment type="domain">
    <text evidence="1">The winged helix domain is involved in binding to DNA in the preinitiation complex.</text>
</comment>
<comment type="similarity">
    <text evidence="1">Belongs to the TFE family.</text>
</comment>
<proteinExistence type="inferred from homology"/>
<keyword id="KW-0238">DNA-binding</keyword>
<keyword id="KW-0804">Transcription</keyword>
<keyword id="KW-0805">Transcription regulation</keyword>
<feature type="chain" id="PRO_1000216183" description="Transcription factor E">
    <location>
        <begin position="1"/>
        <end position="178"/>
    </location>
</feature>
<feature type="domain" description="HTH TFE/IIEalpha-type" evidence="1">
    <location>
        <begin position="4"/>
        <end position="88"/>
    </location>
</feature>
<evidence type="ECO:0000255" key="1">
    <source>
        <dbReference type="HAMAP-Rule" id="MF_01909"/>
    </source>
</evidence>
<protein>
    <recommendedName>
        <fullName evidence="1">Transcription factor E</fullName>
        <shortName evidence="1">TFE</shortName>
    </recommendedName>
    <alternativeName>
        <fullName evidence="1">TFIIE subunit alpha homolog</fullName>
    </alternativeName>
    <alternativeName>
        <fullName evidence="1">Transcription initiation factor TFIIE</fullName>
    </alternativeName>
</protein>
<organism>
    <name type="scientific">Saccharolobus islandicus (strain M.14.25 / Kamchatka #1)</name>
    <name type="common">Sulfolobus islandicus</name>
    <dbReference type="NCBI Taxonomy" id="427317"/>
    <lineage>
        <taxon>Archaea</taxon>
        <taxon>Thermoproteota</taxon>
        <taxon>Thermoprotei</taxon>
        <taxon>Sulfolobales</taxon>
        <taxon>Sulfolobaceae</taxon>
        <taxon>Saccharolobus</taxon>
    </lineage>
</organism>
<name>TFE_SACI4</name>